<proteinExistence type="inferred from homology"/>
<keyword id="KW-0687">Ribonucleoprotein</keyword>
<keyword id="KW-0689">Ribosomal protein</keyword>
<keyword id="KW-0694">RNA-binding</keyword>
<keyword id="KW-0699">rRNA-binding</keyword>
<gene>
    <name evidence="1" type="primary">rplU</name>
    <name type="ordered locus">LJ_1556</name>
</gene>
<feature type="chain" id="PRO_0000269330" description="Large ribosomal subunit protein bL21">
    <location>
        <begin position="1"/>
        <end position="103"/>
    </location>
</feature>
<reference key="1">
    <citation type="journal article" date="2004" name="Proc. Natl. Acad. Sci. U.S.A.">
        <title>The genome sequence of the probiotic intestinal bacterium Lactobacillus johnsonii NCC 533.</title>
        <authorList>
            <person name="Pridmore R.D."/>
            <person name="Berger B."/>
            <person name="Desiere F."/>
            <person name="Vilanova D."/>
            <person name="Barretto C."/>
            <person name="Pittet A.-C."/>
            <person name="Zwahlen M.-C."/>
            <person name="Rouvet M."/>
            <person name="Altermann E."/>
            <person name="Barrangou R."/>
            <person name="Mollet B."/>
            <person name="Mercenier A."/>
            <person name="Klaenhammer T."/>
            <person name="Arigoni F."/>
            <person name="Schell M.A."/>
        </authorList>
    </citation>
    <scope>NUCLEOTIDE SEQUENCE [LARGE SCALE GENOMIC DNA]</scope>
    <source>
        <strain>CNCM I-1225 / La1 / NCC 533</strain>
    </source>
</reference>
<accession>Q74IL4</accession>
<sequence length="103" mass="11451">MYAVIKTGGKQYKVAKGDSVFVEKLEVKPGDEVTFDEVILVNDGKSTKIGTPVVEGAKVVAKVEKQGKEKKVVTFKYKPKKHSHTKYGHRQPYTKVTIESIEA</sequence>
<protein>
    <recommendedName>
        <fullName evidence="1">Large ribosomal subunit protein bL21</fullName>
    </recommendedName>
    <alternativeName>
        <fullName evidence="2">50S ribosomal protein L21</fullName>
    </alternativeName>
</protein>
<name>RL21_LACJO</name>
<comment type="function">
    <text evidence="1">This protein binds to 23S rRNA in the presence of protein L20.</text>
</comment>
<comment type="subunit">
    <text evidence="1">Part of the 50S ribosomal subunit. Contacts protein L20.</text>
</comment>
<comment type="similarity">
    <text evidence="1">Belongs to the bacterial ribosomal protein bL21 family.</text>
</comment>
<dbReference type="EMBL" id="AE017198">
    <property type="protein sequence ID" value="AAS09324.1"/>
    <property type="molecule type" value="Genomic_DNA"/>
</dbReference>
<dbReference type="RefSeq" id="WP_003647543.1">
    <property type="nucleotide sequence ID" value="NC_005362.1"/>
</dbReference>
<dbReference type="SMR" id="Q74IL4"/>
<dbReference type="GeneID" id="83570117"/>
<dbReference type="KEGG" id="ljo:LJ_1556"/>
<dbReference type="eggNOG" id="COG0261">
    <property type="taxonomic scope" value="Bacteria"/>
</dbReference>
<dbReference type="HOGENOM" id="CLU_061463_3_2_9"/>
<dbReference type="Proteomes" id="UP000000581">
    <property type="component" value="Chromosome"/>
</dbReference>
<dbReference type="GO" id="GO:0005737">
    <property type="term" value="C:cytoplasm"/>
    <property type="evidence" value="ECO:0007669"/>
    <property type="project" value="UniProtKB-ARBA"/>
</dbReference>
<dbReference type="GO" id="GO:1990904">
    <property type="term" value="C:ribonucleoprotein complex"/>
    <property type="evidence" value="ECO:0007669"/>
    <property type="project" value="UniProtKB-KW"/>
</dbReference>
<dbReference type="GO" id="GO:0005840">
    <property type="term" value="C:ribosome"/>
    <property type="evidence" value="ECO:0007669"/>
    <property type="project" value="UniProtKB-KW"/>
</dbReference>
<dbReference type="GO" id="GO:0019843">
    <property type="term" value="F:rRNA binding"/>
    <property type="evidence" value="ECO:0007669"/>
    <property type="project" value="UniProtKB-UniRule"/>
</dbReference>
<dbReference type="GO" id="GO:0003735">
    <property type="term" value="F:structural constituent of ribosome"/>
    <property type="evidence" value="ECO:0007669"/>
    <property type="project" value="InterPro"/>
</dbReference>
<dbReference type="GO" id="GO:0006412">
    <property type="term" value="P:translation"/>
    <property type="evidence" value="ECO:0007669"/>
    <property type="project" value="UniProtKB-UniRule"/>
</dbReference>
<dbReference type="HAMAP" id="MF_01363">
    <property type="entry name" value="Ribosomal_bL21"/>
    <property type="match status" value="1"/>
</dbReference>
<dbReference type="InterPro" id="IPR028909">
    <property type="entry name" value="bL21-like"/>
</dbReference>
<dbReference type="InterPro" id="IPR036164">
    <property type="entry name" value="bL21-like_sf"/>
</dbReference>
<dbReference type="InterPro" id="IPR001787">
    <property type="entry name" value="Ribosomal_bL21"/>
</dbReference>
<dbReference type="InterPro" id="IPR018258">
    <property type="entry name" value="Ribosomal_bL21_CS"/>
</dbReference>
<dbReference type="NCBIfam" id="TIGR00061">
    <property type="entry name" value="L21"/>
    <property type="match status" value="1"/>
</dbReference>
<dbReference type="PANTHER" id="PTHR21349">
    <property type="entry name" value="50S RIBOSOMAL PROTEIN L21"/>
    <property type="match status" value="1"/>
</dbReference>
<dbReference type="PANTHER" id="PTHR21349:SF0">
    <property type="entry name" value="LARGE RIBOSOMAL SUBUNIT PROTEIN BL21M"/>
    <property type="match status" value="1"/>
</dbReference>
<dbReference type="Pfam" id="PF00829">
    <property type="entry name" value="Ribosomal_L21p"/>
    <property type="match status" value="1"/>
</dbReference>
<dbReference type="SUPFAM" id="SSF141091">
    <property type="entry name" value="L21p-like"/>
    <property type="match status" value="1"/>
</dbReference>
<dbReference type="PROSITE" id="PS01169">
    <property type="entry name" value="RIBOSOMAL_L21"/>
    <property type="match status" value="1"/>
</dbReference>
<evidence type="ECO:0000255" key="1">
    <source>
        <dbReference type="HAMAP-Rule" id="MF_01363"/>
    </source>
</evidence>
<evidence type="ECO:0000305" key="2"/>
<organism>
    <name type="scientific">Lactobacillus johnsonii (strain CNCM I-12250 / La1 / NCC 533)</name>
    <dbReference type="NCBI Taxonomy" id="257314"/>
    <lineage>
        <taxon>Bacteria</taxon>
        <taxon>Bacillati</taxon>
        <taxon>Bacillota</taxon>
        <taxon>Bacilli</taxon>
        <taxon>Lactobacillales</taxon>
        <taxon>Lactobacillaceae</taxon>
        <taxon>Lactobacillus</taxon>
    </lineage>
</organism>